<proteinExistence type="inferred from homology"/>
<name>GUAA_CLOBB</name>
<keyword id="KW-0067">ATP-binding</keyword>
<keyword id="KW-0315">Glutamine amidotransferase</keyword>
<keyword id="KW-0332">GMP biosynthesis</keyword>
<keyword id="KW-0436">Ligase</keyword>
<keyword id="KW-0547">Nucleotide-binding</keyword>
<keyword id="KW-0658">Purine biosynthesis</keyword>
<evidence type="ECO:0000255" key="1">
    <source>
        <dbReference type="HAMAP-Rule" id="MF_00344"/>
    </source>
</evidence>
<gene>
    <name evidence="1" type="primary">guaA</name>
    <name type="ordered locus">CLL_A0389</name>
</gene>
<protein>
    <recommendedName>
        <fullName evidence="1">GMP synthase [glutamine-hydrolyzing]</fullName>
        <ecNumber evidence="1">6.3.5.2</ecNumber>
    </recommendedName>
    <alternativeName>
        <fullName evidence="1">GMP synthetase</fullName>
    </alternativeName>
    <alternativeName>
        <fullName evidence="1">Glutamine amidotransferase</fullName>
    </alternativeName>
</protein>
<reference key="1">
    <citation type="submission" date="2008-04" db="EMBL/GenBank/DDBJ databases">
        <title>Complete sequence of Clostridium botulinum strain Eklund.</title>
        <authorList>
            <person name="Brinkac L.M."/>
            <person name="Brown J.L."/>
            <person name="Bruce D."/>
            <person name="Detter C."/>
            <person name="Munk C."/>
            <person name="Smith L.A."/>
            <person name="Smith T.J."/>
            <person name="Sutton G."/>
            <person name="Brettin T.S."/>
        </authorList>
    </citation>
    <scope>NUCLEOTIDE SEQUENCE [LARGE SCALE GENOMIC DNA]</scope>
    <source>
        <strain>Eklund 17B / Type B</strain>
    </source>
</reference>
<organism>
    <name type="scientific">Clostridium botulinum (strain Eklund 17B / Type B)</name>
    <dbReference type="NCBI Taxonomy" id="935198"/>
    <lineage>
        <taxon>Bacteria</taxon>
        <taxon>Bacillati</taxon>
        <taxon>Bacillota</taxon>
        <taxon>Clostridia</taxon>
        <taxon>Eubacteriales</taxon>
        <taxon>Clostridiaceae</taxon>
        <taxon>Clostridium</taxon>
    </lineage>
</organism>
<dbReference type="EC" id="6.3.5.2" evidence="1"/>
<dbReference type="EMBL" id="CP001056">
    <property type="protein sequence ID" value="ACD22286.1"/>
    <property type="molecule type" value="Genomic_DNA"/>
</dbReference>
<dbReference type="SMR" id="B2TIX3"/>
<dbReference type="MEROPS" id="C26.957"/>
<dbReference type="KEGG" id="cbk:CLL_A0389"/>
<dbReference type="HOGENOM" id="CLU_014340_0_5_9"/>
<dbReference type="UniPathway" id="UPA00189">
    <property type="reaction ID" value="UER00296"/>
</dbReference>
<dbReference type="Proteomes" id="UP000001195">
    <property type="component" value="Chromosome"/>
</dbReference>
<dbReference type="GO" id="GO:0005829">
    <property type="term" value="C:cytosol"/>
    <property type="evidence" value="ECO:0007669"/>
    <property type="project" value="TreeGrafter"/>
</dbReference>
<dbReference type="GO" id="GO:0005524">
    <property type="term" value="F:ATP binding"/>
    <property type="evidence" value="ECO:0007669"/>
    <property type="project" value="UniProtKB-UniRule"/>
</dbReference>
<dbReference type="GO" id="GO:0003921">
    <property type="term" value="F:GMP synthase activity"/>
    <property type="evidence" value="ECO:0007669"/>
    <property type="project" value="InterPro"/>
</dbReference>
<dbReference type="CDD" id="cd01742">
    <property type="entry name" value="GATase1_GMP_Synthase"/>
    <property type="match status" value="1"/>
</dbReference>
<dbReference type="CDD" id="cd01997">
    <property type="entry name" value="GMP_synthase_C"/>
    <property type="match status" value="1"/>
</dbReference>
<dbReference type="FunFam" id="3.30.300.10:FF:000002">
    <property type="entry name" value="GMP synthase [glutamine-hydrolyzing]"/>
    <property type="match status" value="1"/>
</dbReference>
<dbReference type="FunFam" id="3.40.50.620:FF:000001">
    <property type="entry name" value="GMP synthase [glutamine-hydrolyzing]"/>
    <property type="match status" value="1"/>
</dbReference>
<dbReference type="FunFam" id="3.40.50.880:FF:000001">
    <property type="entry name" value="GMP synthase [glutamine-hydrolyzing]"/>
    <property type="match status" value="1"/>
</dbReference>
<dbReference type="Gene3D" id="3.30.300.10">
    <property type="match status" value="1"/>
</dbReference>
<dbReference type="Gene3D" id="3.40.50.880">
    <property type="match status" value="1"/>
</dbReference>
<dbReference type="Gene3D" id="3.40.50.620">
    <property type="entry name" value="HUPs"/>
    <property type="match status" value="1"/>
</dbReference>
<dbReference type="HAMAP" id="MF_00344">
    <property type="entry name" value="GMP_synthase"/>
    <property type="match status" value="1"/>
</dbReference>
<dbReference type="InterPro" id="IPR029062">
    <property type="entry name" value="Class_I_gatase-like"/>
</dbReference>
<dbReference type="InterPro" id="IPR017926">
    <property type="entry name" value="GATASE"/>
</dbReference>
<dbReference type="InterPro" id="IPR001674">
    <property type="entry name" value="GMP_synth_C"/>
</dbReference>
<dbReference type="InterPro" id="IPR004739">
    <property type="entry name" value="GMP_synth_GATase"/>
</dbReference>
<dbReference type="InterPro" id="IPR022955">
    <property type="entry name" value="GMP_synthase"/>
</dbReference>
<dbReference type="InterPro" id="IPR025777">
    <property type="entry name" value="GMPS_ATP_PPase_dom"/>
</dbReference>
<dbReference type="InterPro" id="IPR014729">
    <property type="entry name" value="Rossmann-like_a/b/a_fold"/>
</dbReference>
<dbReference type="NCBIfam" id="TIGR00884">
    <property type="entry name" value="guaA_Cterm"/>
    <property type="match status" value="1"/>
</dbReference>
<dbReference type="NCBIfam" id="TIGR00888">
    <property type="entry name" value="guaA_Nterm"/>
    <property type="match status" value="1"/>
</dbReference>
<dbReference type="NCBIfam" id="NF000848">
    <property type="entry name" value="PRK00074.1"/>
    <property type="match status" value="1"/>
</dbReference>
<dbReference type="PANTHER" id="PTHR11922:SF2">
    <property type="entry name" value="GMP SYNTHASE [GLUTAMINE-HYDROLYZING]"/>
    <property type="match status" value="1"/>
</dbReference>
<dbReference type="PANTHER" id="PTHR11922">
    <property type="entry name" value="GMP SYNTHASE-RELATED"/>
    <property type="match status" value="1"/>
</dbReference>
<dbReference type="Pfam" id="PF00117">
    <property type="entry name" value="GATase"/>
    <property type="match status" value="1"/>
</dbReference>
<dbReference type="Pfam" id="PF00958">
    <property type="entry name" value="GMP_synt_C"/>
    <property type="match status" value="1"/>
</dbReference>
<dbReference type="Pfam" id="PF03054">
    <property type="entry name" value="tRNA_Me_trans"/>
    <property type="match status" value="1"/>
</dbReference>
<dbReference type="PRINTS" id="PR00099">
    <property type="entry name" value="CPSGATASE"/>
</dbReference>
<dbReference type="PRINTS" id="PR00096">
    <property type="entry name" value="GATASE"/>
</dbReference>
<dbReference type="SUPFAM" id="SSF52402">
    <property type="entry name" value="Adenine nucleotide alpha hydrolases-like"/>
    <property type="match status" value="1"/>
</dbReference>
<dbReference type="SUPFAM" id="SSF52317">
    <property type="entry name" value="Class I glutamine amidotransferase-like"/>
    <property type="match status" value="1"/>
</dbReference>
<dbReference type="SUPFAM" id="SSF54810">
    <property type="entry name" value="GMP synthetase C-terminal dimerisation domain"/>
    <property type="match status" value="1"/>
</dbReference>
<dbReference type="PROSITE" id="PS51273">
    <property type="entry name" value="GATASE_TYPE_1"/>
    <property type="match status" value="1"/>
</dbReference>
<dbReference type="PROSITE" id="PS51553">
    <property type="entry name" value="GMPS_ATP_PPASE"/>
    <property type="match status" value="1"/>
</dbReference>
<comment type="function">
    <text evidence="1">Catalyzes the synthesis of GMP from XMP.</text>
</comment>
<comment type="catalytic activity">
    <reaction evidence="1">
        <text>XMP + L-glutamine + ATP + H2O = GMP + L-glutamate + AMP + diphosphate + 2 H(+)</text>
        <dbReference type="Rhea" id="RHEA:11680"/>
        <dbReference type="ChEBI" id="CHEBI:15377"/>
        <dbReference type="ChEBI" id="CHEBI:15378"/>
        <dbReference type="ChEBI" id="CHEBI:29985"/>
        <dbReference type="ChEBI" id="CHEBI:30616"/>
        <dbReference type="ChEBI" id="CHEBI:33019"/>
        <dbReference type="ChEBI" id="CHEBI:57464"/>
        <dbReference type="ChEBI" id="CHEBI:58115"/>
        <dbReference type="ChEBI" id="CHEBI:58359"/>
        <dbReference type="ChEBI" id="CHEBI:456215"/>
        <dbReference type="EC" id="6.3.5.2"/>
    </reaction>
</comment>
<comment type="pathway">
    <text evidence="1">Purine metabolism; GMP biosynthesis; GMP from XMP (L-Gln route): step 1/1.</text>
</comment>
<comment type="subunit">
    <text evidence="1">Homodimer.</text>
</comment>
<sequence length="513" mass="56922">MKRDLVLVIDFGGQYNQLIARRVRECNVYCEVHPYNLSVDEIKQMNPKGIIFTGGPNSVYGENSPLCDKAIFELGVPIFGICYGSQLMSHILGGKVATAPVSEYGKTKVDVNIESKLFEGVSSSTICWMSHTDYIEKAPEEFKVIGNTPVCPVAAMECEDKNLYAVQFHPEVMHTEEGTKMLSNFVYNICGCTGDWKMDSFVEKTIEEVRQKVGNGKVLCALSGGVDSSVAAVLLSRAVGKQLTCVFVDHGLLRKNEGDEVEEIFGPNGQYDLNFIRVNAQERFYEKLAGIEEPEQKRKIIGEEFIRVFEEEAKKIGTVDYLVQGTIYPDVIESGLGKSAVIKSHHNVGGLPDYVDFKEIIEPLRLLFKDEVRKAGLELGIPEKLVFRQPFPGPGLGIRIIGEVTAEKVKIVQDADAIYREEIANAGIDKEIGQYFAALTNMRSVGVMGDERTYDYAIALRAVTTSDFMTAESADLPWEVLGKVTTRIVNEVKGVNRVMYDCTGKPPATIEFE</sequence>
<feature type="chain" id="PRO_1000205294" description="GMP synthase [glutamine-hydrolyzing]">
    <location>
        <begin position="1"/>
        <end position="513"/>
    </location>
</feature>
<feature type="domain" description="Glutamine amidotransferase type-1" evidence="1">
    <location>
        <begin position="5"/>
        <end position="195"/>
    </location>
</feature>
<feature type="domain" description="GMPS ATP-PPase" evidence="1">
    <location>
        <begin position="196"/>
        <end position="388"/>
    </location>
</feature>
<feature type="active site" description="Nucleophile" evidence="1">
    <location>
        <position position="82"/>
    </location>
</feature>
<feature type="active site" evidence="1">
    <location>
        <position position="169"/>
    </location>
</feature>
<feature type="active site" evidence="1">
    <location>
        <position position="171"/>
    </location>
</feature>
<feature type="binding site" evidence="1">
    <location>
        <begin position="223"/>
        <end position="229"/>
    </location>
    <ligand>
        <name>ATP</name>
        <dbReference type="ChEBI" id="CHEBI:30616"/>
    </ligand>
</feature>
<accession>B2TIX3</accession>